<proteinExistence type="inferred from homology"/>
<organism>
    <name type="scientific">Sodalis glossinidius (strain morsitans)</name>
    <dbReference type="NCBI Taxonomy" id="343509"/>
    <lineage>
        <taxon>Bacteria</taxon>
        <taxon>Pseudomonadati</taxon>
        <taxon>Pseudomonadota</taxon>
        <taxon>Gammaproteobacteria</taxon>
        <taxon>Enterobacterales</taxon>
        <taxon>Bruguierivoracaceae</taxon>
        <taxon>Sodalis</taxon>
    </lineage>
</organism>
<gene>
    <name evidence="1" type="primary">surA</name>
    <name type="ordered locus">SG0426</name>
</gene>
<evidence type="ECO:0000255" key="1">
    <source>
        <dbReference type="HAMAP-Rule" id="MF_01183"/>
    </source>
</evidence>
<name>SURA_SODGM</name>
<keyword id="KW-0143">Chaperone</keyword>
<keyword id="KW-0413">Isomerase</keyword>
<keyword id="KW-0574">Periplasm</keyword>
<keyword id="KW-0677">Repeat</keyword>
<keyword id="KW-0697">Rotamase</keyword>
<keyword id="KW-0732">Signal</keyword>
<sequence length="431" mass="47422">MKNWRTFILGLALCANGALAAPQVVDKVAAVVDNGIVLESEVDNMLSTVKHGAQEANQQLPDDTTLRRQILDRLIMDNIILQLAQRTNITISDEQLDQAIGNIAAQNHMSLDQLRSRLPYDGIDYNTYRTQIRKEMLIAEVRNGEVRRRVTILPQEVESLAQQIAAQTGNGAEFNLSHILIPLPENPTQDQLDKAEELATSIVEQSKSGADFGKLAITYSADAQALKGGQMGWGKLEELPSLFAARLQGAQKGSIVGPIRSGVGFHILKVNDIRGGDQKVAVTEVHARHIMLRTSVVMTDQQARAKLEDIAAQIKSGRISFAAAAKQLSEDPGSANQGGDLGWSSADAFDPAFRNALMHLKKGEISTPVHSSFGWHLIQLIDTRQVDRTDAAQKDRAYRLLFNRKFAEEAQTWMQEQRASAYVKILDSNGQ</sequence>
<protein>
    <recommendedName>
        <fullName evidence="1">Chaperone SurA</fullName>
    </recommendedName>
    <alternativeName>
        <fullName evidence="1">Peptidyl-prolyl cis-trans isomerase SurA</fullName>
        <shortName evidence="1">PPIase SurA</shortName>
        <ecNumber evidence="1">5.2.1.8</ecNumber>
    </alternativeName>
    <alternativeName>
        <fullName evidence="1">Rotamase SurA</fullName>
    </alternativeName>
</protein>
<reference key="1">
    <citation type="journal article" date="2006" name="Genome Res.">
        <title>Massive genome erosion and functional adaptations provide insights into the symbiotic lifestyle of Sodalis glossinidius in the tsetse host.</title>
        <authorList>
            <person name="Toh H."/>
            <person name="Weiss B.L."/>
            <person name="Perkin S.A.H."/>
            <person name="Yamashita A."/>
            <person name="Oshima K."/>
            <person name="Hattori M."/>
            <person name="Aksoy S."/>
        </authorList>
    </citation>
    <scope>NUCLEOTIDE SEQUENCE [LARGE SCALE GENOMIC DNA]</scope>
    <source>
        <strain>morsitans</strain>
    </source>
</reference>
<feature type="signal peptide" evidence="1">
    <location>
        <begin position="1"/>
        <end position="20"/>
    </location>
</feature>
<feature type="chain" id="PRO_0000270042" description="Chaperone SurA">
    <location>
        <begin position="21"/>
        <end position="431"/>
    </location>
</feature>
<feature type="domain" description="PpiC 1" evidence="1">
    <location>
        <begin position="171"/>
        <end position="272"/>
    </location>
</feature>
<feature type="domain" description="PpiC 2" evidence="1">
    <location>
        <begin position="282"/>
        <end position="382"/>
    </location>
</feature>
<accession>Q2NVX4</accession>
<dbReference type="EC" id="5.2.1.8" evidence="1"/>
<dbReference type="EMBL" id="AP008232">
    <property type="protein sequence ID" value="BAE73701.1"/>
    <property type="molecule type" value="Genomic_DNA"/>
</dbReference>
<dbReference type="RefSeq" id="WP_011410289.1">
    <property type="nucleotide sequence ID" value="NC_007712.1"/>
</dbReference>
<dbReference type="SMR" id="Q2NVX4"/>
<dbReference type="STRING" id="343509.SG0426"/>
<dbReference type="KEGG" id="sgl:SG0426"/>
<dbReference type="eggNOG" id="COG0760">
    <property type="taxonomic scope" value="Bacteria"/>
</dbReference>
<dbReference type="HOGENOM" id="CLU_034646_11_0_6"/>
<dbReference type="OrthoDB" id="14196at2"/>
<dbReference type="BioCyc" id="SGLO343509:SGP1_RS03885-MONOMER"/>
<dbReference type="Proteomes" id="UP000001932">
    <property type="component" value="Chromosome"/>
</dbReference>
<dbReference type="GO" id="GO:0030288">
    <property type="term" value="C:outer membrane-bounded periplasmic space"/>
    <property type="evidence" value="ECO:0007669"/>
    <property type="project" value="InterPro"/>
</dbReference>
<dbReference type="GO" id="GO:0042277">
    <property type="term" value="F:peptide binding"/>
    <property type="evidence" value="ECO:0007669"/>
    <property type="project" value="InterPro"/>
</dbReference>
<dbReference type="GO" id="GO:0003755">
    <property type="term" value="F:peptidyl-prolyl cis-trans isomerase activity"/>
    <property type="evidence" value="ECO:0007669"/>
    <property type="project" value="UniProtKB-UniRule"/>
</dbReference>
<dbReference type="GO" id="GO:0051082">
    <property type="term" value="F:unfolded protein binding"/>
    <property type="evidence" value="ECO:0007669"/>
    <property type="project" value="UniProtKB-UniRule"/>
</dbReference>
<dbReference type="GO" id="GO:0043165">
    <property type="term" value="P:Gram-negative-bacterium-type cell outer membrane assembly"/>
    <property type="evidence" value="ECO:0007669"/>
    <property type="project" value="InterPro"/>
</dbReference>
<dbReference type="GO" id="GO:0006457">
    <property type="term" value="P:protein folding"/>
    <property type="evidence" value="ECO:0007669"/>
    <property type="project" value="UniProtKB-UniRule"/>
</dbReference>
<dbReference type="GO" id="GO:0050821">
    <property type="term" value="P:protein stabilization"/>
    <property type="evidence" value="ECO:0007669"/>
    <property type="project" value="InterPro"/>
</dbReference>
<dbReference type="Gene3D" id="3.10.50.40">
    <property type="match status" value="2"/>
</dbReference>
<dbReference type="Gene3D" id="1.10.4030.10">
    <property type="entry name" value="Porin chaperone SurA, peptide-binding domain"/>
    <property type="match status" value="2"/>
</dbReference>
<dbReference type="HAMAP" id="MF_01183">
    <property type="entry name" value="Chaperone_SurA"/>
    <property type="match status" value="1"/>
</dbReference>
<dbReference type="InterPro" id="IPR050280">
    <property type="entry name" value="OMP_Chaperone_SurA"/>
</dbReference>
<dbReference type="InterPro" id="IPR046357">
    <property type="entry name" value="PPIase_dom_sf"/>
</dbReference>
<dbReference type="InterPro" id="IPR000297">
    <property type="entry name" value="PPIase_PpiC"/>
</dbReference>
<dbReference type="InterPro" id="IPR023058">
    <property type="entry name" value="PPIase_PpiC_CS"/>
</dbReference>
<dbReference type="InterPro" id="IPR023034">
    <property type="entry name" value="PPIase_SurA"/>
</dbReference>
<dbReference type="InterPro" id="IPR015391">
    <property type="entry name" value="SurA_N"/>
</dbReference>
<dbReference type="InterPro" id="IPR027304">
    <property type="entry name" value="Trigger_fact/SurA_dom_sf"/>
</dbReference>
<dbReference type="NCBIfam" id="NF008038">
    <property type="entry name" value="PRK10770.1"/>
    <property type="match status" value="1"/>
</dbReference>
<dbReference type="PANTHER" id="PTHR47637">
    <property type="entry name" value="CHAPERONE SURA"/>
    <property type="match status" value="1"/>
</dbReference>
<dbReference type="PANTHER" id="PTHR47637:SF1">
    <property type="entry name" value="CHAPERONE SURA"/>
    <property type="match status" value="1"/>
</dbReference>
<dbReference type="Pfam" id="PF00639">
    <property type="entry name" value="Rotamase"/>
    <property type="match status" value="1"/>
</dbReference>
<dbReference type="Pfam" id="PF13616">
    <property type="entry name" value="Rotamase_3"/>
    <property type="match status" value="1"/>
</dbReference>
<dbReference type="Pfam" id="PF09312">
    <property type="entry name" value="SurA_N"/>
    <property type="match status" value="1"/>
</dbReference>
<dbReference type="SUPFAM" id="SSF54534">
    <property type="entry name" value="FKBP-like"/>
    <property type="match status" value="2"/>
</dbReference>
<dbReference type="SUPFAM" id="SSF109998">
    <property type="entry name" value="Triger factor/SurA peptide-binding domain-like"/>
    <property type="match status" value="1"/>
</dbReference>
<dbReference type="PROSITE" id="PS01096">
    <property type="entry name" value="PPIC_PPIASE_1"/>
    <property type="match status" value="2"/>
</dbReference>
<dbReference type="PROSITE" id="PS50198">
    <property type="entry name" value="PPIC_PPIASE_2"/>
    <property type="match status" value="2"/>
</dbReference>
<comment type="function">
    <text evidence="1">Chaperone involved in the correct folding and assembly of outer membrane proteins. Recognizes specific patterns of aromatic residues and the orientation of their side chains, which are found more frequently in integral outer membrane proteins. May act in both early periplasmic and late outer membrane-associated steps of protein maturation.</text>
</comment>
<comment type="catalytic activity">
    <reaction evidence="1">
        <text>[protein]-peptidylproline (omega=180) = [protein]-peptidylproline (omega=0)</text>
        <dbReference type="Rhea" id="RHEA:16237"/>
        <dbReference type="Rhea" id="RHEA-COMP:10747"/>
        <dbReference type="Rhea" id="RHEA-COMP:10748"/>
        <dbReference type="ChEBI" id="CHEBI:83833"/>
        <dbReference type="ChEBI" id="CHEBI:83834"/>
        <dbReference type="EC" id="5.2.1.8"/>
    </reaction>
</comment>
<comment type="subcellular location">
    <subcellularLocation>
        <location evidence="1">Periplasm</location>
    </subcellularLocation>
    <text evidence="1">Is capable of associating with the outer membrane.</text>
</comment>
<comment type="domain">
    <text evidence="1">The PPIase activity resides only in the second parvulin domain. The N-terminal region and the C-terminal tail are necessary and sufficient for the chaperone activity of SurA. The PPIase activity is dispensable for SurA to function as a chaperone. The N-terminal region and the C-terminal tail are also required for porin recognition.</text>
</comment>